<evidence type="ECO:0000255" key="1">
    <source>
        <dbReference type="HAMAP-Rule" id="MF_01216"/>
    </source>
</evidence>
<name>AZOR_LEGPH</name>
<feature type="chain" id="PRO_0000245928" description="FMN-dependent NADH:quinone oxidoreductase">
    <location>
        <begin position="1"/>
        <end position="206"/>
    </location>
</feature>
<feature type="binding site" evidence="1">
    <location>
        <position position="9"/>
    </location>
    <ligand>
        <name>FMN</name>
        <dbReference type="ChEBI" id="CHEBI:58210"/>
    </ligand>
</feature>
<feature type="binding site" evidence="1">
    <location>
        <begin position="15"/>
        <end position="17"/>
    </location>
    <ligand>
        <name>FMN</name>
        <dbReference type="ChEBI" id="CHEBI:58210"/>
    </ligand>
</feature>
<feature type="binding site" evidence="1">
    <location>
        <begin position="95"/>
        <end position="98"/>
    </location>
    <ligand>
        <name>FMN</name>
        <dbReference type="ChEBI" id="CHEBI:58210"/>
    </ligand>
</feature>
<feature type="binding site" evidence="1">
    <location>
        <begin position="139"/>
        <end position="142"/>
    </location>
    <ligand>
        <name>FMN</name>
        <dbReference type="ChEBI" id="CHEBI:58210"/>
    </ligand>
</feature>
<keyword id="KW-0285">Flavoprotein</keyword>
<keyword id="KW-0288">FMN</keyword>
<keyword id="KW-0520">NAD</keyword>
<keyword id="KW-0560">Oxidoreductase</keyword>
<keyword id="KW-1185">Reference proteome</keyword>
<comment type="function">
    <text evidence="1">Quinone reductase that provides resistance to thiol-specific stress caused by electrophilic quinones.</text>
</comment>
<comment type="function">
    <text evidence="1">Also exhibits azoreductase activity. Catalyzes the reductive cleavage of the azo bond in aromatic azo compounds to the corresponding amines.</text>
</comment>
<comment type="catalytic activity">
    <reaction evidence="1">
        <text>2 a quinone + NADH + H(+) = 2 a 1,4-benzosemiquinone + NAD(+)</text>
        <dbReference type="Rhea" id="RHEA:65952"/>
        <dbReference type="ChEBI" id="CHEBI:15378"/>
        <dbReference type="ChEBI" id="CHEBI:57540"/>
        <dbReference type="ChEBI" id="CHEBI:57945"/>
        <dbReference type="ChEBI" id="CHEBI:132124"/>
        <dbReference type="ChEBI" id="CHEBI:134225"/>
    </reaction>
</comment>
<comment type="catalytic activity">
    <reaction evidence="1">
        <text>N,N-dimethyl-1,4-phenylenediamine + anthranilate + 2 NAD(+) = 2-(4-dimethylaminophenyl)diazenylbenzoate + 2 NADH + 2 H(+)</text>
        <dbReference type="Rhea" id="RHEA:55872"/>
        <dbReference type="ChEBI" id="CHEBI:15378"/>
        <dbReference type="ChEBI" id="CHEBI:15783"/>
        <dbReference type="ChEBI" id="CHEBI:16567"/>
        <dbReference type="ChEBI" id="CHEBI:57540"/>
        <dbReference type="ChEBI" id="CHEBI:57945"/>
        <dbReference type="ChEBI" id="CHEBI:71579"/>
        <dbReference type="EC" id="1.7.1.17"/>
    </reaction>
</comment>
<comment type="cofactor">
    <cofactor evidence="1">
        <name>FMN</name>
        <dbReference type="ChEBI" id="CHEBI:58210"/>
    </cofactor>
    <text evidence="1">Binds 1 FMN per subunit.</text>
</comment>
<comment type="subunit">
    <text evidence="1">Homodimer.</text>
</comment>
<comment type="similarity">
    <text evidence="1">Belongs to the azoreductase type 1 family.</text>
</comment>
<sequence length="206" mass="23101">MKLLAIDSSILTNTSVSRQLTRSFVSRWQKIYPETEVVYRDLHAQPINHLSQKILAANSVPSTQISAEIREEMNLSMQLISELLSASVLVIGAPMYNFSIPSQLKSWIDRIVIAGKTFKYVDGKVQGLATGKRAYILSSRGGFYNAEPALNLDHQERYLTSILNFIGISDITFIRAEGVNVGEEIRTQSLHQAEAKIQQLLQFQMA</sequence>
<proteinExistence type="inferred from homology"/>
<accession>Q5ZT75</accession>
<organism>
    <name type="scientific">Legionella pneumophila subsp. pneumophila (strain Philadelphia 1 / ATCC 33152 / DSM 7513)</name>
    <dbReference type="NCBI Taxonomy" id="272624"/>
    <lineage>
        <taxon>Bacteria</taxon>
        <taxon>Pseudomonadati</taxon>
        <taxon>Pseudomonadota</taxon>
        <taxon>Gammaproteobacteria</taxon>
        <taxon>Legionellales</taxon>
        <taxon>Legionellaceae</taxon>
        <taxon>Legionella</taxon>
    </lineage>
</organism>
<gene>
    <name evidence="1" type="primary">azoR</name>
    <name type="ordered locus">lpg2287</name>
</gene>
<dbReference type="EC" id="1.6.5.-" evidence="1"/>
<dbReference type="EC" id="1.7.1.17" evidence="1"/>
<dbReference type="EMBL" id="AE017354">
    <property type="protein sequence ID" value="AAU28352.1"/>
    <property type="molecule type" value="Genomic_DNA"/>
</dbReference>
<dbReference type="RefSeq" id="WP_010947996.1">
    <property type="nucleotide sequence ID" value="NC_002942.5"/>
</dbReference>
<dbReference type="RefSeq" id="YP_096299.1">
    <property type="nucleotide sequence ID" value="NC_002942.5"/>
</dbReference>
<dbReference type="SMR" id="Q5ZT75"/>
<dbReference type="STRING" id="272624.lpg2287"/>
<dbReference type="PaxDb" id="272624-lpg2287"/>
<dbReference type="KEGG" id="lpn:lpg2287"/>
<dbReference type="PATRIC" id="fig|272624.6.peg.2404"/>
<dbReference type="eggNOG" id="COG1182">
    <property type="taxonomic scope" value="Bacteria"/>
</dbReference>
<dbReference type="HOGENOM" id="CLU_088964_0_0_6"/>
<dbReference type="OrthoDB" id="9787136at2"/>
<dbReference type="Proteomes" id="UP000000609">
    <property type="component" value="Chromosome"/>
</dbReference>
<dbReference type="GO" id="GO:0009055">
    <property type="term" value="F:electron transfer activity"/>
    <property type="evidence" value="ECO:0007669"/>
    <property type="project" value="UniProtKB-UniRule"/>
</dbReference>
<dbReference type="GO" id="GO:0010181">
    <property type="term" value="F:FMN binding"/>
    <property type="evidence" value="ECO:0007669"/>
    <property type="project" value="UniProtKB-UniRule"/>
</dbReference>
<dbReference type="GO" id="GO:0016652">
    <property type="term" value="F:oxidoreductase activity, acting on NAD(P)H as acceptor"/>
    <property type="evidence" value="ECO:0007669"/>
    <property type="project" value="UniProtKB-UniRule"/>
</dbReference>
<dbReference type="GO" id="GO:0016655">
    <property type="term" value="F:oxidoreductase activity, acting on NAD(P)H, quinone or similar compound as acceptor"/>
    <property type="evidence" value="ECO:0007669"/>
    <property type="project" value="InterPro"/>
</dbReference>
<dbReference type="Gene3D" id="3.40.50.360">
    <property type="match status" value="1"/>
</dbReference>
<dbReference type="HAMAP" id="MF_01216">
    <property type="entry name" value="Azoreductase_type1"/>
    <property type="match status" value="1"/>
</dbReference>
<dbReference type="InterPro" id="IPR003680">
    <property type="entry name" value="Flavodoxin_fold"/>
</dbReference>
<dbReference type="InterPro" id="IPR029039">
    <property type="entry name" value="Flavoprotein-like_sf"/>
</dbReference>
<dbReference type="InterPro" id="IPR050104">
    <property type="entry name" value="FMN-dep_NADH:Q_OxRdtase_AzoR1"/>
</dbReference>
<dbReference type="InterPro" id="IPR023048">
    <property type="entry name" value="NADH:quinone_OxRdtase_FMN_depd"/>
</dbReference>
<dbReference type="PANTHER" id="PTHR43741">
    <property type="entry name" value="FMN-DEPENDENT NADH-AZOREDUCTASE 1"/>
    <property type="match status" value="1"/>
</dbReference>
<dbReference type="PANTHER" id="PTHR43741:SF4">
    <property type="entry name" value="FMN-DEPENDENT NADH:QUINONE OXIDOREDUCTASE"/>
    <property type="match status" value="1"/>
</dbReference>
<dbReference type="Pfam" id="PF02525">
    <property type="entry name" value="Flavodoxin_2"/>
    <property type="match status" value="1"/>
</dbReference>
<dbReference type="SUPFAM" id="SSF52218">
    <property type="entry name" value="Flavoproteins"/>
    <property type="match status" value="1"/>
</dbReference>
<protein>
    <recommendedName>
        <fullName evidence="1">FMN-dependent NADH:quinone oxidoreductase</fullName>
        <ecNumber evidence="1">1.6.5.-</ecNumber>
    </recommendedName>
    <alternativeName>
        <fullName evidence="1">Azo-dye reductase</fullName>
    </alternativeName>
    <alternativeName>
        <fullName evidence="1">FMN-dependent NADH-azo compound oxidoreductase</fullName>
    </alternativeName>
    <alternativeName>
        <fullName evidence="1">FMN-dependent NADH-azoreductase</fullName>
        <ecNumber evidence="1">1.7.1.17</ecNumber>
    </alternativeName>
</protein>
<reference key="1">
    <citation type="journal article" date="2004" name="Science">
        <title>The genomic sequence of the accidental pathogen Legionella pneumophila.</title>
        <authorList>
            <person name="Chien M."/>
            <person name="Morozova I."/>
            <person name="Shi S."/>
            <person name="Sheng H."/>
            <person name="Chen J."/>
            <person name="Gomez S.M."/>
            <person name="Asamani G."/>
            <person name="Hill K."/>
            <person name="Nuara J."/>
            <person name="Feder M."/>
            <person name="Rineer J."/>
            <person name="Greenberg J.J."/>
            <person name="Steshenko V."/>
            <person name="Park S.H."/>
            <person name="Zhao B."/>
            <person name="Teplitskaya E."/>
            <person name="Edwards J.R."/>
            <person name="Pampou S."/>
            <person name="Georghiou A."/>
            <person name="Chou I.-C."/>
            <person name="Iannuccilli W."/>
            <person name="Ulz M.E."/>
            <person name="Kim D.H."/>
            <person name="Geringer-Sameth A."/>
            <person name="Goldsberry C."/>
            <person name="Morozov P."/>
            <person name="Fischer S.G."/>
            <person name="Segal G."/>
            <person name="Qu X."/>
            <person name="Rzhetsky A."/>
            <person name="Zhang P."/>
            <person name="Cayanis E."/>
            <person name="De Jong P.J."/>
            <person name="Ju J."/>
            <person name="Kalachikov S."/>
            <person name="Shuman H.A."/>
            <person name="Russo J.J."/>
        </authorList>
    </citation>
    <scope>NUCLEOTIDE SEQUENCE [LARGE SCALE GENOMIC DNA]</scope>
    <source>
        <strain>Philadelphia 1 / ATCC 33152 / DSM 7513</strain>
    </source>
</reference>